<dbReference type="EC" id="4.2.1.20" evidence="1"/>
<dbReference type="EMBL" id="CP001099">
    <property type="protein sequence ID" value="ACF11764.1"/>
    <property type="molecule type" value="Genomic_DNA"/>
</dbReference>
<dbReference type="RefSeq" id="WP_012502597.1">
    <property type="nucleotide sequence ID" value="NC_011027.1"/>
</dbReference>
<dbReference type="SMR" id="B3QPB1"/>
<dbReference type="STRING" id="517417.Cpar_1362"/>
<dbReference type="KEGG" id="cpc:Cpar_1362"/>
<dbReference type="eggNOG" id="COG0159">
    <property type="taxonomic scope" value="Bacteria"/>
</dbReference>
<dbReference type="HOGENOM" id="CLU_016734_0_0_10"/>
<dbReference type="OrthoDB" id="9804578at2"/>
<dbReference type="UniPathway" id="UPA00035">
    <property type="reaction ID" value="UER00044"/>
</dbReference>
<dbReference type="Proteomes" id="UP000008811">
    <property type="component" value="Chromosome"/>
</dbReference>
<dbReference type="GO" id="GO:0005829">
    <property type="term" value="C:cytosol"/>
    <property type="evidence" value="ECO:0007669"/>
    <property type="project" value="TreeGrafter"/>
</dbReference>
<dbReference type="GO" id="GO:0004834">
    <property type="term" value="F:tryptophan synthase activity"/>
    <property type="evidence" value="ECO:0007669"/>
    <property type="project" value="UniProtKB-UniRule"/>
</dbReference>
<dbReference type="CDD" id="cd04724">
    <property type="entry name" value="Tryptophan_synthase_alpha"/>
    <property type="match status" value="1"/>
</dbReference>
<dbReference type="Gene3D" id="3.20.20.70">
    <property type="entry name" value="Aldolase class I"/>
    <property type="match status" value="1"/>
</dbReference>
<dbReference type="HAMAP" id="MF_00131">
    <property type="entry name" value="Trp_synth_alpha"/>
    <property type="match status" value="1"/>
</dbReference>
<dbReference type="InterPro" id="IPR013785">
    <property type="entry name" value="Aldolase_TIM"/>
</dbReference>
<dbReference type="InterPro" id="IPR011060">
    <property type="entry name" value="RibuloseP-bd_barrel"/>
</dbReference>
<dbReference type="InterPro" id="IPR018204">
    <property type="entry name" value="Trp_synthase_alpha_AS"/>
</dbReference>
<dbReference type="InterPro" id="IPR002028">
    <property type="entry name" value="Trp_synthase_suA"/>
</dbReference>
<dbReference type="NCBIfam" id="TIGR00262">
    <property type="entry name" value="trpA"/>
    <property type="match status" value="1"/>
</dbReference>
<dbReference type="PANTHER" id="PTHR43406:SF1">
    <property type="entry name" value="TRYPTOPHAN SYNTHASE ALPHA CHAIN, CHLOROPLASTIC"/>
    <property type="match status" value="1"/>
</dbReference>
<dbReference type="PANTHER" id="PTHR43406">
    <property type="entry name" value="TRYPTOPHAN SYNTHASE, ALPHA CHAIN"/>
    <property type="match status" value="1"/>
</dbReference>
<dbReference type="Pfam" id="PF00290">
    <property type="entry name" value="Trp_syntA"/>
    <property type="match status" value="1"/>
</dbReference>
<dbReference type="SUPFAM" id="SSF51366">
    <property type="entry name" value="Ribulose-phoshate binding barrel"/>
    <property type="match status" value="1"/>
</dbReference>
<dbReference type="PROSITE" id="PS00167">
    <property type="entry name" value="TRP_SYNTHASE_ALPHA"/>
    <property type="match status" value="1"/>
</dbReference>
<keyword id="KW-0028">Amino-acid biosynthesis</keyword>
<keyword id="KW-0057">Aromatic amino acid biosynthesis</keyword>
<keyword id="KW-0456">Lyase</keyword>
<keyword id="KW-0822">Tryptophan biosynthesis</keyword>
<gene>
    <name evidence="1" type="primary">trpA</name>
    <name type="ordered locus">Cpar_1362</name>
</gene>
<proteinExistence type="inferred from homology"/>
<organism>
    <name type="scientific">Chlorobaculum parvum (strain DSM 263 / NCIMB 8327)</name>
    <name type="common">Chlorobium vibrioforme subsp. thiosulfatophilum</name>
    <dbReference type="NCBI Taxonomy" id="517417"/>
    <lineage>
        <taxon>Bacteria</taxon>
        <taxon>Pseudomonadati</taxon>
        <taxon>Chlorobiota</taxon>
        <taxon>Chlorobiia</taxon>
        <taxon>Chlorobiales</taxon>
        <taxon>Chlorobiaceae</taxon>
        <taxon>Chlorobaculum</taxon>
    </lineage>
</organism>
<protein>
    <recommendedName>
        <fullName evidence="1">Tryptophan synthase alpha chain</fullName>
        <ecNumber evidence="1">4.2.1.20</ecNumber>
    </recommendedName>
</protein>
<name>TRPA_CHLP8</name>
<accession>B3QPB1</accession>
<comment type="function">
    <text evidence="1">The alpha subunit is responsible for the aldol cleavage of indoleglycerol phosphate to indole and glyceraldehyde 3-phosphate.</text>
</comment>
<comment type="catalytic activity">
    <reaction evidence="1">
        <text>(1S,2R)-1-C-(indol-3-yl)glycerol 3-phosphate + L-serine = D-glyceraldehyde 3-phosphate + L-tryptophan + H2O</text>
        <dbReference type="Rhea" id="RHEA:10532"/>
        <dbReference type="ChEBI" id="CHEBI:15377"/>
        <dbReference type="ChEBI" id="CHEBI:33384"/>
        <dbReference type="ChEBI" id="CHEBI:57912"/>
        <dbReference type="ChEBI" id="CHEBI:58866"/>
        <dbReference type="ChEBI" id="CHEBI:59776"/>
        <dbReference type="EC" id="4.2.1.20"/>
    </reaction>
</comment>
<comment type="pathway">
    <text evidence="1">Amino-acid biosynthesis; L-tryptophan biosynthesis; L-tryptophan from chorismate: step 5/5.</text>
</comment>
<comment type="subunit">
    <text evidence="1">Tetramer of two alpha and two beta chains.</text>
</comment>
<comment type="similarity">
    <text evidence="1">Belongs to the TrpA family.</text>
</comment>
<feature type="chain" id="PRO_1000095703" description="Tryptophan synthase alpha chain">
    <location>
        <begin position="1"/>
        <end position="267"/>
    </location>
</feature>
<feature type="active site" description="Proton acceptor" evidence="1">
    <location>
        <position position="47"/>
    </location>
</feature>
<feature type="active site" description="Proton acceptor" evidence="1">
    <location>
        <position position="58"/>
    </location>
</feature>
<evidence type="ECO:0000255" key="1">
    <source>
        <dbReference type="HAMAP-Rule" id="MF_00131"/>
    </source>
</evidence>
<sequence length="267" mass="29177">MKENRITRLMKQDKKLLLAYYMPEFPVPGATLPVLEALQENGADIIELGMPYSDPIGDGPVIQDAAHKAISHGVTVRSILDLVKQARAGEGCKKITTPILLMGYSNPLIAYGGDCFMADAVEAGVDGLLIPDLPPEESEDFLERARSFGLTVVYLISPVTPPDRIELIDCMSTDFSYCLAVNATTGTGKLDTAGMDEQIAEYLKRVRKHAKKKFVVGFGIKDRERVRKMWELADGAVVGSALLQQVASAKTPEETAAMAAEFWQSLR</sequence>
<reference key="1">
    <citation type="submission" date="2008-06" db="EMBL/GenBank/DDBJ databases">
        <title>Complete sequence of Chlorobaculum parvum NCIB 8327.</title>
        <authorList>
            <consortium name="US DOE Joint Genome Institute"/>
            <person name="Lucas S."/>
            <person name="Copeland A."/>
            <person name="Lapidus A."/>
            <person name="Glavina del Rio T."/>
            <person name="Dalin E."/>
            <person name="Tice H."/>
            <person name="Bruce D."/>
            <person name="Goodwin L."/>
            <person name="Pitluck S."/>
            <person name="Schmutz J."/>
            <person name="Larimer F."/>
            <person name="Land M."/>
            <person name="Hauser L."/>
            <person name="Kyrpides N."/>
            <person name="Mikhailova N."/>
            <person name="Zhao F."/>
            <person name="Li T."/>
            <person name="Liu Z."/>
            <person name="Overmann J."/>
            <person name="Bryant D.A."/>
            <person name="Richardson P."/>
        </authorList>
    </citation>
    <scope>NUCLEOTIDE SEQUENCE [LARGE SCALE GENOMIC DNA]</scope>
    <source>
        <strain>DSM 263 / NCIMB 8327</strain>
    </source>
</reference>